<reference key="1">
    <citation type="journal article" date="2004" name="Proc. Natl. Acad. Sci. U.S.A.">
        <title>The diploid genome sequence of Candida albicans.</title>
        <authorList>
            <person name="Jones T."/>
            <person name="Federspiel N.A."/>
            <person name="Chibana H."/>
            <person name="Dungan J."/>
            <person name="Kalman S."/>
            <person name="Magee B.B."/>
            <person name="Newport G."/>
            <person name="Thorstenson Y.R."/>
            <person name="Agabian N."/>
            <person name="Magee P.T."/>
            <person name="Davis R.W."/>
            <person name="Scherer S."/>
        </authorList>
    </citation>
    <scope>NUCLEOTIDE SEQUENCE [LARGE SCALE GENOMIC DNA]</scope>
    <source>
        <strain>SC5314 / ATCC MYA-2876</strain>
    </source>
</reference>
<reference key="2">
    <citation type="journal article" date="2007" name="Genome Biol.">
        <title>Assembly of the Candida albicans genome into sixteen supercontigs aligned on the eight chromosomes.</title>
        <authorList>
            <person name="van het Hoog M."/>
            <person name="Rast T.J."/>
            <person name="Martchenko M."/>
            <person name="Grindle S."/>
            <person name="Dignard D."/>
            <person name="Hogues H."/>
            <person name="Cuomo C."/>
            <person name="Berriman M."/>
            <person name="Scherer S."/>
            <person name="Magee B.B."/>
            <person name="Whiteway M."/>
            <person name="Chibana H."/>
            <person name="Nantel A."/>
            <person name="Magee P.T."/>
        </authorList>
    </citation>
    <scope>GENOME REANNOTATION</scope>
    <source>
        <strain>SC5314 / ATCC MYA-2876</strain>
    </source>
</reference>
<reference key="3">
    <citation type="journal article" date="2013" name="Genome Biol.">
        <title>Assembly of a phased diploid Candida albicans genome facilitates allele-specific measurements and provides a simple model for repeat and indel structure.</title>
        <authorList>
            <person name="Muzzey D."/>
            <person name="Schwartz K."/>
            <person name="Weissman J.S."/>
            <person name="Sherlock G."/>
        </authorList>
    </citation>
    <scope>NUCLEOTIDE SEQUENCE [LARGE SCALE GENOMIC DNA]</scope>
    <scope>GENOME REANNOTATION</scope>
    <source>
        <strain>SC5314 / ATCC MYA-2876</strain>
    </source>
</reference>
<reference key="4">
    <citation type="journal article" date="2009" name="Infect. Immun.">
        <title>BAR domain proteins Rvs161 and Rvs167 contribute to Candida albicans endocytosis, morphogenesis, and virulence.</title>
        <authorList>
            <person name="Douglas L.M."/>
            <person name="Martin S.W."/>
            <person name="Konopka J.B."/>
        </authorList>
    </citation>
    <scope>DISRUPTION PHENOTYPE</scope>
    <scope>FUNCTION</scope>
</reference>
<reference key="5">
    <citation type="journal article" date="2009" name="Proteomics">
        <title>A proteomic analysis of the salt, cadmium and peroxide stress responses in Candida albicans and the role of the Hog1 stress-activated MAPK in regulating the stress-induced proteome.</title>
        <authorList>
            <person name="Yin Z."/>
            <person name="Stead D."/>
            <person name="Walker J."/>
            <person name="Selway L."/>
            <person name="Smith D.A."/>
            <person name="Brown A.J."/>
            <person name="Quinn J."/>
        </authorList>
    </citation>
    <scope>IDENTIFICATION BY MASS SPECTROMETRY</scope>
    <scope>INDUCTION</scope>
</reference>
<feature type="chain" id="PRO_0000430556" description="Regulator of cytoskeleton and endocytosis RVS161">
    <location>
        <begin position="1"/>
        <end position="264"/>
    </location>
</feature>
<feature type="domain" description="BAR" evidence="2">
    <location>
        <begin position="15"/>
        <end position="239"/>
    </location>
</feature>
<name>RV161_CANAL</name>
<gene>
    <name type="primary">RVS161</name>
    <name type="ordered locus">CAALFM_C700020CA</name>
    <name type="ORF">CaO19.7124</name>
    <name type="ORF">orf19.7124</name>
</gene>
<proteinExistence type="evidence at protein level"/>
<organism>
    <name type="scientific">Candida albicans (strain SC5314 / ATCC MYA-2876)</name>
    <name type="common">Yeast</name>
    <dbReference type="NCBI Taxonomy" id="237561"/>
    <lineage>
        <taxon>Eukaryota</taxon>
        <taxon>Fungi</taxon>
        <taxon>Dikarya</taxon>
        <taxon>Ascomycota</taxon>
        <taxon>Saccharomycotina</taxon>
        <taxon>Pichiomycetes</taxon>
        <taxon>Debaryomycetaceae</taxon>
        <taxon>Candida/Lodderomyces clade</taxon>
        <taxon>Candida</taxon>
    </lineage>
</organism>
<dbReference type="EMBL" id="CP017629">
    <property type="protein sequence ID" value="AOW30381.1"/>
    <property type="molecule type" value="Genomic_DNA"/>
</dbReference>
<dbReference type="RefSeq" id="XP_720414.2">
    <property type="nucleotide sequence ID" value="XM_715321.2"/>
</dbReference>
<dbReference type="SMR" id="Q5AFE4"/>
<dbReference type="BioGRID" id="1221099">
    <property type="interactions" value="3"/>
</dbReference>
<dbReference type="FunCoup" id="Q5AFE4">
    <property type="interactions" value="446"/>
</dbReference>
<dbReference type="STRING" id="237561.Q5AFE4"/>
<dbReference type="EnsemblFungi" id="C7_00020C_A-T">
    <property type="protein sequence ID" value="C7_00020C_A-T-p1"/>
    <property type="gene ID" value="C7_00020C_A"/>
</dbReference>
<dbReference type="GeneID" id="3638005"/>
<dbReference type="KEGG" id="cal:CAALFM_C700020CA"/>
<dbReference type="CGD" id="CAL0000193274">
    <property type="gene designation" value="RVS161"/>
</dbReference>
<dbReference type="VEuPathDB" id="FungiDB:C7_00020C_A"/>
<dbReference type="HOGENOM" id="CLU_072096_0_0_1"/>
<dbReference type="InParanoid" id="Q5AFE4"/>
<dbReference type="OMA" id="TRFCAYF"/>
<dbReference type="OrthoDB" id="446293at2759"/>
<dbReference type="Proteomes" id="UP000000559">
    <property type="component" value="Chromosome 7"/>
</dbReference>
<dbReference type="GO" id="GO:0030479">
    <property type="term" value="C:actin cortical patch"/>
    <property type="evidence" value="ECO:0000318"/>
    <property type="project" value="GO_Central"/>
</dbReference>
<dbReference type="GO" id="GO:0015629">
    <property type="term" value="C:actin cytoskeleton"/>
    <property type="evidence" value="ECO:0000318"/>
    <property type="project" value="GO_Central"/>
</dbReference>
<dbReference type="GO" id="GO:0043332">
    <property type="term" value="C:mating projection tip"/>
    <property type="evidence" value="ECO:0000318"/>
    <property type="project" value="GO_Central"/>
</dbReference>
<dbReference type="GO" id="GO:0031097">
    <property type="term" value="C:medial cortex"/>
    <property type="evidence" value="ECO:0000318"/>
    <property type="project" value="GO_Central"/>
</dbReference>
<dbReference type="GO" id="GO:0045121">
    <property type="term" value="C:membrane raft"/>
    <property type="evidence" value="ECO:0007669"/>
    <property type="project" value="EnsemblFungi"/>
</dbReference>
<dbReference type="GO" id="GO:1990528">
    <property type="term" value="C:Rvs161p-Rvs167p complex"/>
    <property type="evidence" value="ECO:0000318"/>
    <property type="project" value="GO_Central"/>
</dbReference>
<dbReference type="GO" id="GO:0008092">
    <property type="term" value="F:cytoskeletal protein binding"/>
    <property type="evidence" value="ECO:0007669"/>
    <property type="project" value="EnsemblFungi"/>
</dbReference>
<dbReference type="GO" id="GO:0008289">
    <property type="term" value="F:lipid binding"/>
    <property type="evidence" value="ECO:0007669"/>
    <property type="project" value="EnsemblFungi"/>
</dbReference>
<dbReference type="GO" id="GO:0051666">
    <property type="term" value="P:actin cortical patch localization"/>
    <property type="evidence" value="ECO:0000315"/>
    <property type="project" value="CGD"/>
</dbReference>
<dbReference type="GO" id="GO:0030036">
    <property type="term" value="P:actin cytoskeleton organization"/>
    <property type="evidence" value="ECO:0007669"/>
    <property type="project" value="EnsemblFungi"/>
</dbReference>
<dbReference type="GO" id="GO:0000747">
    <property type="term" value="P:conjugation with cellular fusion"/>
    <property type="evidence" value="ECO:0007669"/>
    <property type="project" value="EnsemblFungi"/>
</dbReference>
<dbReference type="GO" id="GO:0006897">
    <property type="term" value="P:endocytosis"/>
    <property type="evidence" value="ECO:0000315"/>
    <property type="project" value="CGD"/>
</dbReference>
<dbReference type="GO" id="GO:0030447">
    <property type="term" value="P:filamentous growth"/>
    <property type="evidence" value="ECO:0000315"/>
    <property type="project" value="CGD"/>
</dbReference>
<dbReference type="GO" id="GO:0036180">
    <property type="term" value="P:filamentous growth of a population of unicellular organisms in response to biotic stimulus"/>
    <property type="evidence" value="ECO:0000315"/>
    <property type="project" value="CGD"/>
</dbReference>
<dbReference type="GO" id="GO:0031505">
    <property type="term" value="P:fungal-type cell wall organization"/>
    <property type="evidence" value="ECO:0000315"/>
    <property type="project" value="CGD"/>
</dbReference>
<dbReference type="GO" id="GO:0060988">
    <property type="term" value="P:lipid tube assembly"/>
    <property type="evidence" value="ECO:0007669"/>
    <property type="project" value="EnsemblFungi"/>
</dbReference>
<dbReference type="GO" id="GO:0097320">
    <property type="term" value="P:plasma membrane tubulation"/>
    <property type="evidence" value="ECO:0000318"/>
    <property type="project" value="GO_Central"/>
</dbReference>
<dbReference type="GO" id="GO:0030100">
    <property type="term" value="P:regulation of endocytosis"/>
    <property type="evidence" value="ECO:0007669"/>
    <property type="project" value="EnsemblFungi"/>
</dbReference>
<dbReference type="GO" id="GO:0006970">
    <property type="term" value="P:response to osmotic stress"/>
    <property type="evidence" value="ECO:0007669"/>
    <property type="project" value="EnsemblFungi"/>
</dbReference>
<dbReference type="GO" id="GO:0042594">
    <property type="term" value="P:response to starvation"/>
    <property type="evidence" value="ECO:0007669"/>
    <property type="project" value="EnsemblFungi"/>
</dbReference>
<dbReference type="FunFam" id="1.20.1270.60:FF:000014">
    <property type="entry name" value="Protein hob3, variant"/>
    <property type="match status" value="1"/>
</dbReference>
<dbReference type="Gene3D" id="1.20.1270.60">
    <property type="entry name" value="Arfaptin homology (AH) domain/BAR domain"/>
    <property type="match status" value="1"/>
</dbReference>
<dbReference type="InterPro" id="IPR027267">
    <property type="entry name" value="AH/BAR_dom_sf"/>
</dbReference>
<dbReference type="InterPro" id="IPR004148">
    <property type="entry name" value="BAR_dom"/>
</dbReference>
<dbReference type="InterPro" id="IPR046982">
    <property type="entry name" value="BIN3/RVS161-like"/>
</dbReference>
<dbReference type="PANTHER" id="PTHR47174">
    <property type="entry name" value="BRIDGING INTEGRATOR 3"/>
    <property type="match status" value="1"/>
</dbReference>
<dbReference type="PANTHER" id="PTHR47174:SF3">
    <property type="entry name" value="BRIDGING INTEGRATOR 3"/>
    <property type="match status" value="1"/>
</dbReference>
<dbReference type="Pfam" id="PF03114">
    <property type="entry name" value="BAR"/>
    <property type="match status" value="1"/>
</dbReference>
<dbReference type="SMART" id="SM00721">
    <property type="entry name" value="BAR"/>
    <property type="match status" value="1"/>
</dbReference>
<dbReference type="SUPFAM" id="SSF103657">
    <property type="entry name" value="BAR/IMD domain-like"/>
    <property type="match status" value="1"/>
</dbReference>
<dbReference type="PROSITE" id="PS51021">
    <property type="entry name" value="BAR"/>
    <property type="match status" value="1"/>
</dbReference>
<evidence type="ECO:0000250" key="1">
    <source>
        <dbReference type="UniProtKB" id="P25343"/>
    </source>
</evidence>
<evidence type="ECO:0000255" key="2">
    <source>
        <dbReference type="PROSITE-ProRule" id="PRU00361"/>
    </source>
</evidence>
<evidence type="ECO:0000269" key="3">
    <source>
    </source>
</evidence>
<evidence type="ECO:0000269" key="4">
    <source>
    </source>
</evidence>
<evidence type="ECO:0000305" key="5"/>
<keyword id="KW-0963">Cytoplasm</keyword>
<keyword id="KW-0206">Cytoskeleton</keyword>
<keyword id="KW-0254">Endocytosis</keyword>
<keyword id="KW-1185">Reference proteome</keyword>
<keyword id="KW-0843">Virulence</keyword>
<sequence length="264" mass="30084">MSWGGFKKAINRAGASVIVKDVDKTMDKDFDVEERRYKTLKTAGTNLQKAAKGYLDNIRAITNSQVTIAEIIYNLYEESKQGQSLYSNVGTYYMQSVKEFDEETVKQIDGPYRETVLDPIGKFSNYFSEIDEAIKKRAHKKIDYEQCKAKVRRLVDKPAKDAAKLPRAEKELSMAKEIYDELNDQLKAELPQLIALRVPFYDPSFEALVKIQLRFCTEGYSRLAQIQQYLDPASRDEYANGLLDGKIDDMLAQMQGLSITSLGK</sequence>
<protein>
    <recommendedName>
        <fullName evidence="5">Regulator of cytoskeleton and endocytosis RVS161</fullName>
    </recommendedName>
</protein>
<accession>Q5AFE4</accession>
<accession>A0A1D8PQG7</accession>
<comment type="function">
    <text evidence="3">Component of a cytoskeletal structure that is required for the formation of endocytic vesicles at the plasma membrane level. Plays an important role in virulence.</text>
</comment>
<comment type="subcellular location">
    <subcellularLocation>
        <location evidence="1">Cytoplasm</location>
        <location evidence="1">Cytoskeleton</location>
    </subcellularLocation>
</comment>
<comment type="induction">
    <text evidence="4">Expression is induced in absence of HOG1 under non-stressed conditions.</text>
</comment>
<comment type="disruption phenotype">
    <text evidence="3">Leads to defects in actin polarization, endocytosis, bud morphogenesis, as well as increased sensitivity to calcofluor white and Congo red. Also shows a strong defect of hyphal morphogenesis and attenuated virulence.</text>
</comment>